<organism>
    <name type="scientific">Xanthomonas campestris pv. campestris (strain 8004)</name>
    <dbReference type="NCBI Taxonomy" id="314565"/>
    <lineage>
        <taxon>Bacteria</taxon>
        <taxon>Pseudomonadati</taxon>
        <taxon>Pseudomonadota</taxon>
        <taxon>Gammaproteobacteria</taxon>
        <taxon>Lysobacterales</taxon>
        <taxon>Lysobacteraceae</taxon>
        <taxon>Xanthomonas</taxon>
    </lineage>
</organism>
<evidence type="ECO:0000255" key="1">
    <source>
        <dbReference type="HAMAP-Rule" id="MF_00227"/>
    </source>
</evidence>
<evidence type="ECO:0000256" key="2">
    <source>
        <dbReference type="SAM" id="MobiDB-lite"/>
    </source>
</evidence>
<protein>
    <recommendedName>
        <fullName evidence="1">Ribonuclease P protein component</fullName>
        <shortName evidence="1">RNase P protein</shortName>
        <shortName evidence="1">RNaseP protein</shortName>
        <ecNumber evidence="1">3.1.26.5</ecNumber>
    </recommendedName>
    <alternativeName>
        <fullName evidence="1">Protein C5</fullName>
    </alternativeName>
</protein>
<comment type="function">
    <text evidence="1">RNaseP catalyzes the removal of the 5'-leader sequence from pre-tRNA to produce the mature 5'-terminus. It can also cleave other RNA substrates such as 4.5S RNA. The protein component plays an auxiliary but essential role in vivo by binding to the 5'-leader sequence and broadening the substrate specificity of the ribozyme.</text>
</comment>
<comment type="catalytic activity">
    <reaction evidence="1">
        <text>Endonucleolytic cleavage of RNA, removing 5'-extranucleotides from tRNA precursor.</text>
        <dbReference type="EC" id="3.1.26.5"/>
    </reaction>
</comment>
<comment type="subunit">
    <text evidence="1">Consists of a catalytic RNA component (M1 or rnpB) and a protein subunit.</text>
</comment>
<comment type="similarity">
    <text evidence="1">Belongs to the RnpA family.</text>
</comment>
<name>RNPA_XANC8</name>
<gene>
    <name evidence="1" type="primary">rnpA</name>
    <name type="ordered locus">XC_4331</name>
</gene>
<proteinExistence type="inferred from homology"/>
<reference key="1">
    <citation type="journal article" date="2005" name="Genome Res.">
        <title>Comparative and functional genomic analyses of the pathogenicity of phytopathogen Xanthomonas campestris pv. campestris.</title>
        <authorList>
            <person name="Qian W."/>
            <person name="Jia Y."/>
            <person name="Ren S.-X."/>
            <person name="He Y.-Q."/>
            <person name="Feng J.-X."/>
            <person name="Lu L.-F."/>
            <person name="Sun Q."/>
            <person name="Ying G."/>
            <person name="Tang D.-J."/>
            <person name="Tang H."/>
            <person name="Wu W."/>
            <person name="Hao P."/>
            <person name="Wang L."/>
            <person name="Jiang B.-L."/>
            <person name="Zeng S."/>
            <person name="Gu W.-Y."/>
            <person name="Lu G."/>
            <person name="Rong L."/>
            <person name="Tian Y."/>
            <person name="Yao Z."/>
            <person name="Fu G."/>
            <person name="Chen B."/>
            <person name="Fang R."/>
            <person name="Qiang B."/>
            <person name="Chen Z."/>
            <person name="Zhao G.-P."/>
            <person name="Tang J.-L."/>
            <person name="He C."/>
        </authorList>
    </citation>
    <scope>NUCLEOTIDE SEQUENCE [LARGE SCALE GENOMIC DNA]</scope>
    <source>
        <strain>8004</strain>
    </source>
</reference>
<sequence>MNASNPCRRFPRSARVRTRAQYTVVFDTARRTSDPLLSLHWRSGETPPRLGMAVSRKVDTRAVGRNRIKRVLRDAMRHLLPELAGGDYVIVARSAAAKATNPQIRDAFVRLLRRAGALPLPAAPGTMPPARAPRPSSLSPTEPDPRSD</sequence>
<accession>Q4UNK7</accession>
<keyword id="KW-0255">Endonuclease</keyword>
<keyword id="KW-0378">Hydrolase</keyword>
<keyword id="KW-0540">Nuclease</keyword>
<keyword id="KW-0694">RNA-binding</keyword>
<keyword id="KW-0819">tRNA processing</keyword>
<feature type="chain" id="PRO_1000021491" description="Ribonuclease P protein component">
    <location>
        <begin position="1"/>
        <end position="148"/>
    </location>
</feature>
<feature type="region of interest" description="Disordered" evidence="2">
    <location>
        <begin position="119"/>
        <end position="148"/>
    </location>
</feature>
<dbReference type="EC" id="3.1.26.5" evidence="1"/>
<dbReference type="EMBL" id="CP000050">
    <property type="protein sequence ID" value="AAY51366.1"/>
    <property type="molecule type" value="Genomic_DNA"/>
</dbReference>
<dbReference type="RefSeq" id="WP_011039302.1">
    <property type="nucleotide sequence ID" value="NZ_CP155948.1"/>
</dbReference>
<dbReference type="SMR" id="Q4UNK7"/>
<dbReference type="KEGG" id="xcb:XC_4331"/>
<dbReference type="HOGENOM" id="CLU_117179_3_0_6"/>
<dbReference type="Proteomes" id="UP000000420">
    <property type="component" value="Chromosome"/>
</dbReference>
<dbReference type="GO" id="GO:0030677">
    <property type="term" value="C:ribonuclease P complex"/>
    <property type="evidence" value="ECO:0007669"/>
    <property type="project" value="TreeGrafter"/>
</dbReference>
<dbReference type="GO" id="GO:0042781">
    <property type="term" value="F:3'-tRNA processing endoribonuclease activity"/>
    <property type="evidence" value="ECO:0007669"/>
    <property type="project" value="TreeGrafter"/>
</dbReference>
<dbReference type="GO" id="GO:0004526">
    <property type="term" value="F:ribonuclease P activity"/>
    <property type="evidence" value="ECO:0007669"/>
    <property type="project" value="UniProtKB-UniRule"/>
</dbReference>
<dbReference type="GO" id="GO:0000049">
    <property type="term" value="F:tRNA binding"/>
    <property type="evidence" value="ECO:0007669"/>
    <property type="project" value="UniProtKB-UniRule"/>
</dbReference>
<dbReference type="GO" id="GO:0001682">
    <property type="term" value="P:tRNA 5'-leader removal"/>
    <property type="evidence" value="ECO:0007669"/>
    <property type="project" value="UniProtKB-UniRule"/>
</dbReference>
<dbReference type="FunFam" id="3.30.230.10:FF:000082">
    <property type="entry name" value="Ribonuclease P protein component"/>
    <property type="match status" value="1"/>
</dbReference>
<dbReference type="Gene3D" id="3.30.230.10">
    <property type="match status" value="1"/>
</dbReference>
<dbReference type="HAMAP" id="MF_00227">
    <property type="entry name" value="RNase_P"/>
    <property type="match status" value="1"/>
</dbReference>
<dbReference type="InterPro" id="IPR020568">
    <property type="entry name" value="Ribosomal_Su5_D2-typ_SF"/>
</dbReference>
<dbReference type="InterPro" id="IPR014721">
    <property type="entry name" value="Ribsml_uS5_D2-typ_fold_subgr"/>
</dbReference>
<dbReference type="InterPro" id="IPR000100">
    <property type="entry name" value="RNase_P"/>
</dbReference>
<dbReference type="InterPro" id="IPR020539">
    <property type="entry name" value="RNase_P_CS"/>
</dbReference>
<dbReference type="NCBIfam" id="TIGR00188">
    <property type="entry name" value="rnpA"/>
    <property type="match status" value="1"/>
</dbReference>
<dbReference type="PANTHER" id="PTHR33992">
    <property type="entry name" value="RIBONUCLEASE P PROTEIN COMPONENT"/>
    <property type="match status" value="1"/>
</dbReference>
<dbReference type="PANTHER" id="PTHR33992:SF1">
    <property type="entry name" value="RIBONUCLEASE P PROTEIN COMPONENT"/>
    <property type="match status" value="1"/>
</dbReference>
<dbReference type="Pfam" id="PF00825">
    <property type="entry name" value="Ribonuclease_P"/>
    <property type="match status" value="1"/>
</dbReference>
<dbReference type="SUPFAM" id="SSF54211">
    <property type="entry name" value="Ribosomal protein S5 domain 2-like"/>
    <property type="match status" value="1"/>
</dbReference>
<dbReference type="PROSITE" id="PS00648">
    <property type="entry name" value="RIBONUCLEASE_P"/>
    <property type="match status" value="1"/>
</dbReference>